<proteinExistence type="inferred from homology"/>
<evidence type="ECO:0000250" key="1"/>
<evidence type="ECO:0000255" key="2"/>
<evidence type="ECO:0000305" key="3"/>
<organism>
    <name type="scientific">Kluyveromyces lactis (strain ATCC 8585 / CBS 2359 / DSM 70799 / NBRC 1267 / NRRL Y-1140 / WM37)</name>
    <name type="common">Yeast</name>
    <name type="synonym">Candida sphaerica</name>
    <dbReference type="NCBI Taxonomy" id="284590"/>
    <lineage>
        <taxon>Eukaryota</taxon>
        <taxon>Fungi</taxon>
        <taxon>Dikarya</taxon>
        <taxon>Ascomycota</taxon>
        <taxon>Saccharomycotina</taxon>
        <taxon>Saccharomycetes</taxon>
        <taxon>Saccharomycetales</taxon>
        <taxon>Saccharomycetaceae</taxon>
        <taxon>Kluyveromyces</taxon>
    </lineage>
</organism>
<comment type="function">
    <text evidence="1">Acts as a component of the essential kinetochore-associated NDC80 complex, which is required for chromosome segregation and spindle checkpoint activity.</text>
</comment>
<comment type="subunit">
    <text evidence="1">Component of the NDC80 complex, which consists of NDC80, NUF2, SPC24 and SPC25.</text>
</comment>
<comment type="subcellular location">
    <subcellularLocation>
        <location evidence="1">Nucleus</location>
    </subcellularLocation>
    <subcellularLocation>
        <location evidence="1">Chromosome</location>
        <location evidence="1">Centromere</location>
        <location evidence="1">Kinetochore</location>
    </subcellularLocation>
    <text evidence="1">Associated with kinetochores.</text>
</comment>
<comment type="similarity">
    <text evidence="3">Belongs to the SPC24 family.</text>
</comment>
<dbReference type="EMBL" id="CR382125">
    <property type="protein sequence ID" value="CAG99585.1"/>
    <property type="molecule type" value="Genomic_DNA"/>
</dbReference>
<dbReference type="RefSeq" id="XP_454498.1">
    <property type="nucleotide sequence ID" value="XM_454498.1"/>
</dbReference>
<dbReference type="SMR" id="Q6CNJ1"/>
<dbReference type="FunCoup" id="Q6CNJ1">
    <property type="interactions" value="155"/>
</dbReference>
<dbReference type="STRING" id="284590.Q6CNJ1"/>
<dbReference type="PaxDb" id="284590-Q6CNJ1"/>
<dbReference type="KEGG" id="kla:KLLA0_E12189g"/>
<dbReference type="HOGENOM" id="CLU_1434641_0_0_1"/>
<dbReference type="InParanoid" id="Q6CNJ1"/>
<dbReference type="Proteomes" id="UP000000598">
    <property type="component" value="Chromosome E"/>
</dbReference>
<dbReference type="GO" id="GO:0031262">
    <property type="term" value="C:Ndc80 complex"/>
    <property type="evidence" value="ECO:0000250"/>
    <property type="project" value="UniProtKB"/>
</dbReference>
<dbReference type="GO" id="GO:0005634">
    <property type="term" value="C:nucleus"/>
    <property type="evidence" value="ECO:0007669"/>
    <property type="project" value="UniProtKB-SubCell"/>
</dbReference>
<dbReference type="GO" id="GO:0051301">
    <property type="term" value="P:cell division"/>
    <property type="evidence" value="ECO:0007669"/>
    <property type="project" value="UniProtKB-KW"/>
</dbReference>
<dbReference type="GO" id="GO:0031134">
    <property type="term" value="P:sister chromatid biorientation"/>
    <property type="evidence" value="ECO:0000250"/>
    <property type="project" value="UniProtKB"/>
</dbReference>
<sequence length="189" mass="22048">MSRLNDPVELLQQTRSNFIIESDVSNIKEIKSNMRQLTKLMAEKQTHHNELMKQLQSQLQRQQTKVQALKKNFQEQTSQVKRVEDELNIPKLQQDIDKLVQEINQLRDTIQEGIQKVVETQKQLLNDDTDAAHTIDEEPIGKDDKIRVLKLKLFHSLDVALYNDQLLDLRNEARPLSSSSSSHNIWDEL</sequence>
<reference key="1">
    <citation type="journal article" date="2004" name="Nature">
        <title>Genome evolution in yeasts.</title>
        <authorList>
            <person name="Dujon B."/>
            <person name="Sherman D."/>
            <person name="Fischer G."/>
            <person name="Durrens P."/>
            <person name="Casaregola S."/>
            <person name="Lafontaine I."/>
            <person name="de Montigny J."/>
            <person name="Marck C."/>
            <person name="Neuveglise C."/>
            <person name="Talla E."/>
            <person name="Goffard N."/>
            <person name="Frangeul L."/>
            <person name="Aigle M."/>
            <person name="Anthouard V."/>
            <person name="Babour A."/>
            <person name="Barbe V."/>
            <person name="Barnay S."/>
            <person name="Blanchin S."/>
            <person name="Beckerich J.-M."/>
            <person name="Beyne E."/>
            <person name="Bleykasten C."/>
            <person name="Boisrame A."/>
            <person name="Boyer J."/>
            <person name="Cattolico L."/>
            <person name="Confanioleri F."/>
            <person name="de Daruvar A."/>
            <person name="Despons L."/>
            <person name="Fabre E."/>
            <person name="Fairhead C."/>
            <person name="Ferry-Dumazet H."/>
            <person name="Groppi A."/>
            <person name="Hantraye F."/>
            <person name="Hennequin C."/>
            <person name="Jauniaux N."/>
            <person name="Joyet P."/>
            <person name="Kachouri R."/>
            <person name="Kerrest A."/>
            <person name="Koszul R."/>
            <person name="Lemaire M."/>
            <person name="Lesur I."/>
            <person name="Ma L."/>
            <person name="Muller H."/>
            <person name="Nicaud J.-M."/>
            <person name="Nikolski M."/>
            <person name="Oztas S."/>
            <person name="Ozier-Kalogeropoulos O."/>
            <person name="Pellenz S."/>
            <person name="Potier S."/>
            <person name="Richard G.-F."/>
            <person name="Straub M.-L."/>
            <person name="Suleau A."/>
            <person name="Swennen D."/>
            <person name="Tekaia F."/>
            <person name="Wesolowski-Louvel M."/>
            <person name="Westhof E."/>
            <person name="Wirth B."/>
            <person name="Zeniou-Meyer M."/>
            <person name="Zivanovic Y."/>
            <person name="Bolotin-Fukuhara M."/>
            <person name="Thierry A."/>
            <person name="Bouchier C."/>
            <person name="Caudron B."/>
            <person name="Scarpelli C."/>
            <person name="Gaillardin C."/>
            <person name="Weissenbach J."/>
            <person name="Wincker P."/>
            <person name="Souciet J.-L."/>
        </authorList>
    </citation>
    <scope>NUCLEOTIDE SEQUENCE [LARGE SCALE GENOMIC DNA]</scope>
    <source>
        <strain>ATCC 8585 / CBS 2359 / DSM 70799 / NBRC 1267 / NRRL Y-1140 / WM37</strain>
    </source>
</reference>
<feature type="chain" id="PRO_0000246665" description="Probable kinetochore protein SPC24">
    <location>
        <begin position="1"/>
        <end position="189"/>
    </location>
</feature>
<feature type="coiled-coil region" evidence="2">
    <location>
        <begin position="24"/>
        <end position="124"/>
    </location>
</feature>
<accession>Q6CNJ1</accession>
<gene>
    <name type="primary">SPC24</name>
    <name type="ordered locus">KLLA0E12199g</name>
</gene>
<name>SPC24_KLULA</name>
<protein>
    <recommendedName>
        <fullName>Probable kinetochore protein SPC24</fullName>
    </recommendedName>
</protein>
<keyword id="KW-0131">Cell cycle</keyword>
<keyword id="KW-0132">Cell division</keyword>
<keyword id="KW-0137">Centromere</keyword>
<keyword id="KW-0158">Chromosome</keyword>
<keyword id="KW-0175">Coiled coil</keyword>
<keyword id="KW-0995">Kinetochore</keyword>
<keyword id="KW-0498">Mitosis</keyword>
<keyword id="KW-0539">Nucleus</keyword>
<keyword id="KW-1185">Reference proteome</keyword>